<name>ACCA_YERPE</name>
<accession>Q8ZH52</accession>
<accession>Q0WHY5</accession>
<accession>Q74S51</accession>
<accession>Q7CH19</accession>
<proteinExistence type="inferred from homology"/>
<organism>
    <name type="scientific">Yersinia pestis</name>
    <dbReference type="NCBI Taxonomy" id="632"/>
    <lineage>
        <taxon>Bacteria</taxon>
        <taxon>Pseudomonadati</taxon>
        <taxon>Pseudomonadota</taxon>
        <taxon>Gammaproteobacteria</taxon>
        <taxon>Enterobacterales</taxon>
        <taxon>Yersiniaceae</taxon>
        <taxon>Yersinia</taxon>
    </lineage>
</organism>
<feature type="chain" id="PRO_0000223861" description="Acetyl-coenzyme A carboxylase carboxyl transferase subunit alpha">
    <location>
        <begin position="1"/>
        <end position="319"/>
    </location>
</feature>
<feature type="domain" description="CoA carboxyltransferase C-terminal" evidence="2">
    <location>
        <begin position="35"/>
        <end position="296"/>
    </location>
</feature>
<protein>
    <recommendedName>
        <fullName evidence="1">Acetyl-coenzyme A carboxylase carboxyl transferase subunit alpha</fullName>
        <shortName evidence="1">ACCase subunit alpha</shortName>
        <shortName evidence="1">Acetyl-CoA carboxylase carboxyltransferase subunit alpha</shortName>
        <ecNumber evidence="1">2.1.3.15</ecNumber>
    </recommendedName>
</protein>
<keyword id="KW-0067">ATP-binding</keyword>
<keyword id="KW-0963">Cytoplasm</keyword>
<keyword id="KW-0275">Fatty acid biosynthesis</keyword>
<keyword id="KW-0276">Fatty acid metabolism</keyword>
<keyword id="KW-0444">Lipid biosynthesis</keyword>
<keyword id="KW-0443">Lipid metabolism</keyword>
<keyword id="KW-0547">Nucleotide-binding</keyword>
<keyword id="KW-1185">Reference proteome</keyword>
<keyword id="KW-0808">Transferase</keyword>
<dbReference type="EC" id="2.1.3.15" evidence="1"/>
<dbReference type="EMBL" id="AL590842">
    <property type="protein sequence ID" value="CAL19725.1"/>
    <property type="molecule type" value="Genomic_DNA"/>
</dbReference>
<dbReference type="EMBL" id="AE009952">
    <property type="protein sequence ID" value="AAM86669.1"/>
    <property type="molecule type" value="Genomic_DNA"/>
</dbReference>
<dbReference type="EMBL" id="AE017042">
    <property type="protein sequence ID" value="AAS62974.1"/>
    <property type="molecule type" value="Genomic_DNA"/>
</dbReference>
<dbReference type="PIR" id="AC0130">
    <property type="entry name" value="AC0130"/>
</dbReference>
<dbReference type="RefSeq" id="WP_002212147.1">
    <property type="nucleotide sequence ID" value="NZ_WUCM01000044.1"/>
</dbReference>
<dbReference type="RefSeq" id="YP_002346103.1">
    <property type="nucleotide sequence ID" value="NC_003143.1"/>
</dbReference>
<dbReference type="SMR" id="Q8ZH52"/>
<dbReference type="IntAct" id="Q8ZH52">
    <property type="interactions" value="1"/>
</dbReference>
<dbReference type="STRING" id="214092.YPO1060"/>
<dbReference type="PaxDb" id="214092-YPO1060"/>
<dbReference type="DNASU" id="1148066"/>
<dbReference type="EnsemblBacteria" id="AAS62974">
    <property type="protein sequence ID" value="AAS62974"/>
    <property type="gene ID" value="YP_2790"/>
</dbReference>
<dbReference type="GeneID" id="57977501"/>
<dbReference type="KEGG" id="ype:YPO1060"/>
<dbReference type="KEGG" id="ypk:y3119"/>
<dbReference type="KEGG" id="ypm:YP_2790"/>
<dbReference type="PATRIC" id="fig|214092.21.peg.1348"/>
<dbReference type="eggNOG" id="COG0825">
    <property type="taxonomic scope" value="Bacteria"/>
</dbReference>
<dbReference type="HOGENOM" id="CLU_015486_0_2_6"/>
<dbReference type="OMA" id="RNFGMAN"/>
<dbReference type="OrthoDB" id="9808023at2"/>
<dbReference type="UniPathway" id="UPA00655">
    <property type="reaction ID" value="UER00711"/>
</dbReference>
<dbReference type="Proteomes" id="UP000000815">
    <property type="component" value="Chromosome"/>
</dbReference>
<dbReference type="Proteomes" id="UP000001019">
    <property type="component" value="Chromosome"/>
</dbReference>
<dbReference type="Proteomes" id="UP000002490">
    <property type="component" value="Chromosome"/>
</dbReference>
<dbReference type="GO" id="GO:0009317">
    <property type="term" value="C:acetyl-CoA carboxylase complex"/>
    <property type="evidence" value="ECO:0007669"/>
    <property type="project" value="InterPro"/>
</dbReference>
<dbReference type="GO" id="GO:0003989">
    <property type="term" value="F:acetyl-CoA carboxylase activity"/>
    <property type="evidence" value="ECO:0007669"/>
    <property type="project" value="InterPro"/>
</dbReference>
<dbReference type="GO" id="GO:0005524">
    <property type="term" value="F:ATP binding"/>
    <property type="evidence" value="ECO:0007669"/>
    <property type="project" value="UniProtKB-KW"/>
</dbReference>
<dbReference type="GO" id="GO:0016743">
    <property type="term" value="F:carboxyl- or carbamoyltransferase activity"/>
    <property type="evidence" value="ECO:0007669"/>
    <property type="project" value="UniProtKB-UniRule"/>
</dbReference>
<dbReference type="GO" id="GO:0006633">
    <property type="term" value="P:fatty acid biosynthetic process"/>
    <property type="evidence" value="ECO:0007669"/>
    <property type="project" value="UniProtKB-KW"/>
</dbReference>
<dbReference type="GO" id="GO:2001295">
    <property type="term" value="P:malonyl-CoA biosynthetic process"/>
    <property type="evidence" value="ECO:0007669"/>
    <property type="project" value="UniProtKB-UniRule"/>
</dbReference>
<dbReference type="FunFam" id="3.90.226.10:FF:000008">
    <property type="entry name" value="Acetyl-coenzyme A carboxylase carboxyl transferase subunit alpha"/>
    <property type="match status" value="1"/>
</dbReference>
<dbReference type="Gene3D" id="3.90.226.10">
    <property type="entry name" value="2-enoyl-CoA Hydratase, Chain A, domain 1"/>
    <property type="match status" value="1"/>
</dbReference>
<dbReference type="HAMAP" id="MF_00823">
    <property type="entry name" value="AcetylCoA_CT_alpha"/>
    <property type="match status" value="1"/>
</dbReference>
<dbReference type="InterPro" id="IPR001095">
    <property type="entry name" value="Acetyl_CoA_COase_a_su"/>
</dbReference>
<dbReference type="InterPro" id="IPR029045">
    <property type="entry name" value="ClpP/crotonase-like_dom_sf"/>
</dbReference>
<dbReference type="InterPro" id="IPR011763">
    <property type="entry name" value="COA_CT_C"/>
</dbReference>
<dbReference type="NCBIfam" id="TIGR00513">
    <property type="entry name" value="accA"/>
    <property type="match status" value="1"/>
</dbReference>
<dbReference type="NCBIfam" id="NF041504">
    <property type="entry name" value="AccA_sub"/>
    <property type="match status" value="1"/>
</dbReference>
<dbReference type="NCBIfam" id="NF004344">
    <property type="entry name" value="PRK05724.1"/>
    <property type="match status" value="1"/>
</dbReference>
<dbReference type="PANTHER" id="PTHR42853">
    <property type="entry name" value="ACETYL-COENZYME A CARBOXYLASE CARBOXYL TRANSFERASE SUBUNIT ALPHA"/>
    <property type="match status" value="1"/>
</dbReference>
<dbReference type="PANTHER" id="PTHR42853:SF3">
    <property type="entry name" value="ACETYL-COENZYME A CARBOXYLASE CARBOXYL TRANSFERASE SUBUNIT ALPHA, CHLOROPLASTIC"/>
    <property type="match status" value="1"/>
</dbReference>
<dbReference type="Pfam" id="PF03255">
    <property type="entry name" value="ACCA"/>
    <property type="match status" value="1"/>
</dbReference>
<dbReference type="PRINTS" id="PR01069">
    <property type="entry name" value="ACCCTRFRASEA"/>
</dbReference>
<dbReference type="SUPFAM" id="SSF52096">
    <property type="entry name" value="ClpP/crotonase"/>
    <property type="match status" value="1"/>
</dbReference>
<dbReference type="PROSITE" id="PS50989">
    <property type="entry name" value="COA_CT_CTER"/>
    <property type="match status" value="1"/>
</dbReference>
<evidence type="ECO:0000255" key="1">
    <source>
        <dbReference type="HAMAP-Rule" id="MF_00823"/>
    </source>
</evidence>
<evidence type="ECO:0000255" key="2">
    <source>
        <dbReference type="PROSITE-ProRule" id="PRU01137"/>
    </source>
</evidence>
<gene>
    <name evidence="1" type="primary">accA</name>
    <name type="ordered locus">YPO1060</name>
    <name type="ordered locus">y3119</name>
    <name type="ordered locus">YP_2790</name>
</gene>
<comment type="function">
    <text evidence="1">Component of the acetyl coenzyme A carboxylase (ACC) complex. First, biotin carboxylase catalyzes the carboxylation of biotin on its carrier protein (BCCP) and then the CO(2) group is transferred by the carboxyltransferase to acetyl-CoA to form malonyl-CoA.</text>
</comment>
<comment type="catalytic activity">
    <reaction evidence="1">
        <text>N(6)-carboxybiotinyl-L-lysyl-[protein] + acetyl-CoA = N(6)-biotinyl-L-lysyl-[protein] + malonyl-CoA</text>
        <dbReference type="Rhea" id="RHEA:54728"/>
        <dbReference type="Rhea" id="RHEA-COMP:10505"/>
        <dbReference type="Rhea" id="RHEA-COMP:10506"/>
        <dbReference type="ChEBI" id="CHEBI:57288"/>
        <dbReference type="ChEBI" id="CHEBI:57384"/>
        <dbReference type="ChEBI" id="CHEBI:83144"/>
        <dbReference type="ChEBI" id="CHEBI:83145"/>
        <dbReference type="EC" id="2.1.3.15"/>
    </reaction>
</comment>
<comment type="pathway">
    <text evidence="1">Lipid metabolism; malonyl-CoA biosynthesis; malonyl-CoA from acetyl-CoA: step 1/1.</text>
</comment>
<comment type="subunit">
    <text evidence="1">Acetyl-CoA carboxylase is a heterohexamer composed of biotin carboxyl carrier protein (AccB), biotin carboxylase (AccC) and two subunits each of ACCase subunit alpha (AccA) and ACCase subunit beta (AccD).</text>
</comment>
<comment type="subcellular location">
    <subcellularLocation>
        <location evidence="1">Cytoplasm</location>
    </subcellularLocation>
</comment>
<comment type="similarity">
    <text evidence="1">Belongs to the AccA family.</text>
</comment>
<sequence>MSLNFLDFEQPIAELEAKIDSLTAVSRQDEKLDINLDEEVQRLREKSVELTRKIFSDLGAWQIAQLARHPRRPYTLDYIANIFTDFEELAGDRAYADDKAIVGGIARLDGRPVMIIGHQKGRETKEKIRRNFGMPAPEGYRKALRLMEMAERFKLPIITFIDTPGAYPGVGAEERGQSEAIARNLREMSRLNVPIVCTVIGEGGSGGALAIGVGDKVNMLQYSTYSVISPEGCASILWKSADKAPLAAEAMGITAHRLKELKMIDSVIPEPLGGAHRDYAAIAISLKAQLLADLNDLDVLNDEELLNRRYQRLMNYGYC</sequence>
<reference key="1">
    <citation type="journal article" date="2001" name="Nature">
        <title>Genome sequence of Yersinia pestis, the causative agent of plague.</title>
        <authorList>
            <person name="Parkhill J."/>
            <person name="Wren B.W."/>
            <person name="Thomson N.R."/>
            <person name="Titball R.W."/>
            <person name="Holden M.T.G."/>
            <person name="Prentice M.B."/>
            <person name="Sebaihia M."/>
            <person name="James K.D."/>
            <person name="Churcher C.M."/>
            <person name="Mungall K.L."/>
            <person name="Baker S."/>
            <person name="Basham D."/>
            <person name="Bentley S.D."/>
            <person name="Brooks K."/>
            <person name="Cerdeno-Tarraga A.-M."/>
            <person name="Chillingworth T."/>
            <person name="Cronin A."/>
            <person name="Davies R.M."/>
            <person name="Davis P."/>
            <person name="Dougan G."/>
            <person name="Feltwell T."/>
            <person name="Hamlin N."/>
            <person name="Holroyd S."/>
            <person name="Jagels K."/>
            <person name="Karlyshev A.V."/>
            <person name="Leather S."/>
            <person name="Moule S."/>
            <person name="Oyston P.C.F."/>
            <person name="Quail M.A."/>
            <person name="Rutherford K.M."/>
            <person name="Simmonds M."/>
            <person name="Skelton J."/>
            <person name="Stevens K."/>
            <person name="Whitehead S."/>
            <person name="Barrell B.G."/>
        </authorList>
    </citation>
    <scope>NUCLEOTIDE SEQUENCE [LARGE SCALE GENOMIC DNA]</scope>
    <source>
        <strain>CO-92 / Biovar Orientalis</strain>
    </source>
</reference>
<reference key="2">
    <citation type="journal article" date="2002" name="J. Bacteriol.">
        <title>Genome sequence of Yersinia pestis KIM.</title>
        <authorList>
            <person name="Deng W."/>
            <person name="Burland V."/>
            <person name="Plunkett G. III"/>
            <person name="Boutin A."/>
            <person name="Mayhew G.F."/>
            <person name="Liss P."/>
            <person name="Perna N.T."/>
            <person name="Rose D.J."/>
            <person name="Mau B."/>
            <person name="Zhou S."/>
            <person name="Schwartz D.C."/>
            <person name="Fetherston J.D."/>
            <person name="Lindler L.E."/>
            <person name="Brubaker R.R."/>
            <person name="Plano G.V."/>
            <person name="Straley S.C."/>
            <person name="McDonough K.A."/>
            <person name="Nilles M.L."/>
            <person name="Matson J.S."/>
            <person name="Blattner F.R."/>
            <person name="Perry R.D."/>
        </authorList>
    </citation>
    <scope>NUCLEOTIDE SEQUENCE [LARGE SCALE GENOMIC DNA]</scope>
    <source>
        <strain>KIM10+ / Biovar Mediaevalis</strain>
    </source>
</reference>
<reference key="3">
    <citation type="journal article" date="2004" name="DNA Res.">
        <title>Complete genome sequence of Yersinia pestis strain 91001, an isolate avirulent to humans.</title>
        <authorList>
            <person name="Song Y."/>
            <person name="Tong Z."/>
            <person name="Wang J."/>
            <person name="Wang L."/>
            <person name="Guo Z."/>
            <person name="Han Y."/>
            <person name="Zhang J."/>
            <person name="Pei D."/>
            <person name="Zhou D."/>
            <person name="Qin H."/>
            <person name="Pang X."/>
            <person name="Han Y."/>
            <person name="Zhai J."/>
            <person name="Li M."/>
            <person name="Cui B."/>
            <person name="Qi Z."/>
            <person name="Jin L."/>
            <person name="Dai R."/>
            <person name="Chen F."/>
            <person name="Li S."/>
            <person name="Ye C."/>
            <person name="Du Z."/>
            <person name="Lin W."/>
            <person name="Wang J."/>
            <person name="Yu J."/>
            <person name="Yang H."/>
            <person name="Wang J."/>
            <person name="Huang P."/>
            <person name="Yang R."/>
        </authorList>
    </citation>
    <scope>NUCLEOTIDE SEQUENCE [LARGE SCALE GENOMIC DNA]</scope>
    <source>
        <strain>91001 / Biovar Mediaevalis</strain>
    </source>
</reference>